<sequence length="72" mass="8398">MKNSESLKEFKKLNSDQITEKIGQLRKDLFELRFKQATRQLNETHKFKIIKKQVAQLLTLSKTQSASKTTSD</sequence>
<feature type="chain" id="PRO_1000007552" description="Large ribosomal subunit protein uL29">
    <location>
        <begin position="1"/>
        <end position="72"/>
    </location>
</feature>
<name>RL29_PROM0</name>
<protein>
    <recommendedName>
        <fullName evidence="1">Large ribosomal subunit protein uL29</fullName>
    </recommendedName>
    <alternativeName>
        <fullName evidence="2">50S ribosomal protein L29</fullName>
    </alternativeName>
</protein>
<dbReference type="EMBL" id="CP000576">
    <property type="protein sequence ID" value="ABO18364.1"/>
    <property type="molecule type" value="Genomic_DNA"/>
</dbReference>
<dbReference type="SMR" id="A3PF39"/>
<dbReference type="STRING" id="167546.P9301_17411"/>
<dbReference type="KEGG" id="pmg:P9301_17411"/>
<dbReference type="eggNOG" id="COG0255">
    <property type="taxonomic scope" value="Bacteria"/>
</dbReference>
<dbReference type="HOGENOM" id="CLU_158491_0_1_3"/>
<dbReference type="OrthoDB" id="9815192at2"/>
<dbReference type="Proteomes" id="UP000001430">
    <property type="component" value="Chromosome"/>
</dbReference>
<dbReference type="GO" id="GO:0022625">
    <property type="term" value="C:cytosolic large ribosomal subunit"/>
    <property type="evidence" value="ECO:0007669"/>
    <property type="project" value="TreeGrafter"/>
</dbReference>
<dbReference type="GO" id="GO:0003735">
    <property type="term" value="F:structural constituent of ribosome"/>
    <property type="evidence" value="ECO:0007669"/>
    <property type="project" value="InterPro"/>
</dbReference>
<dbReference type="GO" id="GO:0006412">
    <property type="term" value="P:translation"/>
    <property type="evidence" value="ECO:0007669"/>
    <property type="project" value="UniProtKB-UniRule"/>
</dbReference>
<dbReference type="Gene3D" id="1.10.287.310">
    <property type="match status" value="1"/>
</dbReference>
<dbReference type="HAMAP" id="MF_00374">
    <property type="entry name" value="Ribosomal_uL29"/>
    <property type="match status" value="1"/>
</dbReference>
<dbReference type="InterPro" id="IPR050063">
    <property type="entry name" value="Ribosomal_protein_uL29"/>
</dbReference>
<dbReference type="InterPro" id="IPR001854">
    <property type="entry name" value="Ribosomal_uL29"/>
</dbReference>
<dbReference type="InterPro" id="IPR036049">
    <property type="entry name" value="Ribosomal_uL29_sf"/>
</dbReference>
<dbReference type="NCBIfam" id="TIGR00012">
    <property type="entry name" value="L29"/>
    <property type="match status" value="1"/>
</dbReference>
<dbReference type="PANTHER" id="PTHR10916">
    <property type="entry name" value="60S RIBOSOMAL PROTEIN L35/50S RIBOSOMAL PROTEIN L29"/>
    <property type="match status" value="1"/>
</dbReference>
<dbReference type="PANTHER" id="PTHR10916:SF0">
    <property type="entry name" value="LARGE RIBOSOMAL SUBUNIT PROTEIN UL29C"/>
    <property type="match status" value="1"/>
</dbReference>
<dbReference type="Pfam" id="PF00831">
    <property type="entry name" value="Ribosomal_L29"/>
    <property type="match status" value="1"/>
</dbReference>
<dbReference type="SUPFAM" id="SSF46561">
    <property type="entry name" value="Ribosomal protein L29 (L29p)"/>
    <property type="match status" value="1"/>
</dbReference>
<evidence type="ECO:0000255" key="1">
    <source>
        <dbReference type="HAMAP-Rule" id="MF_00374"/>
    </source>
</evidence>
<evidence type="ECO:0000305" key="2"/>
<gene>
    <name evidence="1" type="primary">rpmC</name>
    <name evidence="1" type="synonym">rpl29</name>
    <name type="ordered locus">P9301_17411</name>
</gene>
<organism>
    <name type="scientific">Prochlorococcus marinus (strain MIT 9301)</name>
    <dbReference type="NCBI Taxonomy" id="167546"/>
    <lineage>
        <taxon>Bacteria</taxon>
        <taxon>Bacillati</taxon>
        <taxon>Cyanobacteriota</taxon>
        <taxon>Cyanophyceae</taxon>
        <taxon>Synechococcales</taxon>
        <taxon>Prochlorococcaceae</taxon>
        <taxon>Prochlorococcus</taxon>
    </lineage>
</organism>
<accession>A3PF39</accession>
<comment type="similarity">
    <text evidence="1">Belongs to the universal ribosomal protein uL29 family.</text>
</comment>
<keyword id="KW-1185">Reference proteome</keyword>
<keyword id="KW-0687">Ribonucleoprotein</keyword>
<keyword id="KW-0689">Ribosomal protein</keyword>
<proteinExistence type="inferred from homology"/>
<reference key="1">
    <citation type="journal article" date="2007" name="PLoS Genet.">
        <title>Patterns and implications of gene gain and loss in the evolution of Prochlorococcus.</title>
        <authorList>
            <person name="Kettler G.C."/>
            <person name="Martiny A.C."/>
            <person name="Huang K."/>
            <person name="Zucker J."/>
            <person name="Coleman M.L."/>
            <person name="Rodrigue S."/>
            <person name="Chen F."/>
            <person name="Lapidus A."/>
            <person name="Ferriera S."/>
            <person name="Johnson J."/>
            <person name="Steglich C."/>
            <person name="Church G.M."/>
            <person name="Richardson P."/>
            <person name="Chisholm S.W."/>
        </authorList>
    </citation>
    <scope>NUCLEOTIDE SEQUENCE [LARGE SCALE GENOMIC DNA]</scope>
    <source>
        <strain>MIT 9301</strain>
    </source>
</reference>